<dbReference type="EMBL" id="CP000673">
    <property type="protein sequence ID" value="EDK32275.1"/>
    <property type="molecule type" value="Genomic_DNA"/>
</dbReference>
<dbReference type="RefSeq" id="WP_011988801.1">
    <property type="nucleotide sequence ID" value="NC_009706.1"/>
</dbReference>
<dbReference type="SMR" id="A5N4P4"/>
<dbReference type="STRING" id="431943.CKL_0221"/>
<dbReference type="KEGG" id="ckl:CKL_0221"/>
<dbReference type="eggNOG" id="COG0480">
    <property type="taxonomic scope" value="Bacteria"/>
</dbReference>
<dbReference type="HOGENOM" id="CLU_002794_4_1_9"/>
<dbReference type="Proteomes" id="UP000002411">
    <property type="component" value="Chromosome"/>
</dbReference>
<dbReference type="GO" id="GO:0005737">
    <property type="term" value="C:cytoplasm"/>
    <property type="evidence" value="ECO:0007669"/>
    <property type="project" value="UniProtKB-SubCell"/>
</dbReference>
<dbReference type="GO" id="GO:0005525">
    <property type="term" value="F:GTP binding"/>
    <property type="evidence" value="ECO:0007669"/>
    <property type="project" value="UniProtKB-UniRule"/>
</dbReference>
<dbReference type="GO" id="GO:0003924">
    <property type="term" value="F:GTPase activity"/>
    <property type="evidence" value="ECO:0007669"/>
    <property type="project" value="InterPro"/>
</dbReference>
<dbReference type="GO" id="GO:0003746">
    <property type="term" value="F:translation elongation factor activity"/>
    <property type="evidence" value="ECO:0007669"/>
    <property type="project" value="UniProtKB-UniRule"/>
</dbReference>
<dbReference type="GO" id="GO:0032790">
    <property type="term" value="P:ribosome disassembly"/>
    <property type="evidence" value="ECO:0007669"/>
    <property type="project" value="TreeGrafter"/>
</dbReference>
<dbReference type="CDD" id="cd01886">
    <property type="entry name" value="EF-G"/>
    <property type="match status" value="1"/>
</dbReference>
<dbReference type="CDD" id="cd16262">
    <property type="entry name" value="EFG_III"/>
    <property type="match status" value="1"/>
</dbReference>
<dbReference type="CDD" id="cd01434">
    <property type="entry name" value="EFG_mtEFG1_IV"/>
    <property type="match status" value="1"/>
</dbReference>
<dbReference type="CDD" id="cd03713">
    <property type="entry name" value="EFG_mtEFG_C"/>
    <property type="match status" value="1"/>
</dbReference>
<dbReference type="CDD" id="cd04088">
    <property type="entry name" value="EFG_mtEFG_II"/>
    <property type="match status" value="1"/>
</dbReference>
<dbReference type="FunFam" id="2.40.30.10:FF:000006">
    <property type="entry name" value="Elongation factor G"/>
    <property type="match status" value="1"/>
</dbReference>
<dbReference type="FunFam" id="3.30.230.10:FF:000003">
    <property type="entry name" value="Elongation factor G"/>
    <property type="match status" value="1"/>
</dbReference>
<dbReference type="FunFam" id="3.30.70.240:FF:000001">
    <property type="entry name" value="Elongation factor G"/>
    <property type="match status" value="1"/>
</dbReference>
<dbReference type="FunFam" id="3.30.70.870:FF:000001">
    <property type="entry name" value="Elongation factor G"/>
    <property type="match status" value="1"/>
</dbReference>
<dbReference type="FunFam" id="3.40.50.300:FF:000029">
    <property type="entry name" value="Elongation factor G"/>
    <property type="match status" value="1"/>
</dbReference>
<dbReference type="Gene3D" id="3.30.230.10">
    <property type="match status" value="1"/>
</dbReference>
<dbReference type="Gene3D" id="3.30.70.240">
    <property type="match status" value="1"/>
</dbReference>
<dbReference type="Gene3D" id="3.30.70.870">
    <property type="entry name" value="Elongation Factor G (Translational Gtpase), domain 3"/>
    <property type="match status" value="1"/>
</dbReference>
<dbReference type="Gene3D" id="3.40.50.300">
    <property type="entry name" value="P-loop containing nucleotide triphosphate hydrolases"/>
    <property type="match status" value="1"/>
</dbReference>
<dbReference type="Gene3D" id="2.40.30.10">
    <property type="entry name" value="Translation factors"/>
    <property type="match status" value="1"/>
</dbReference>
<dbReference type="HAMAP" id="MF_00054_B">
    <property type="entry name" value="EF_G_EF_2_B"/>
    <property type="match status" value="1"/>
</dbReference>
<dbReference type="InterPro" id="IPR041095">
    <property type="entry name" value="EFG_II"/>
</dbReference>
<dbReference type="InterPro" id="IPR009022">
    <property type="entry name" value="EFG_III"/>
</dbReference>
<dbReference type="InterPro" id="IPR035647">
    <property type="entry name" value="EFG_III/V"/>
</dbReference>
<dbReference type="InterPro" id="IPR047872">
    <property type="entry name" value="EFG_IV"/>
</dbReference>
<dbReference type="InterPro" id="IPR035649">
    <property type="entry name" value="EFG_V"/>
</dbReference>
<dbReference type="InterPro" id="IPR000640">
    <property type="entry name" value="EFG_V-like"/>
</dbReference>
<dbReference type="InterPro" id="IPR004161">
    <property type="entry name" value="EFTu-like_2"/>
</dbReference>
<dbReference type="InterPro" id="IPR031157">
    <property type="entry name" value="G_TR_CS"/>
</dbReference>
<dbReference type="InterPro" id="IPR027417">
    <property type="entry name" value="P-loop_NTPase"/>
</dbReference>
<dbReference type="InterPro" id="IPR020568">
    <property type="entry name" value="Ribosomal_Su5_D2-typ_SF"/>
</dbReference>
<dbReference type="InterPro" id="IPR014721">
    <property type="entry name" value="Ribsml_uS5_D2-typ_fold_subgr"/>
</dbReference>
<dbReference type="InterPro" id="IPR005225">
    <property type="entry name" value="Small_GTP-bd"/>
</dbReference>
<dbReference type="InterPro" id="IPR000795">
    <property type="entry name" value="T_Tr_GTP-bd_dom"/>
</dbReference>
<dbReference type="InterPro" id="IPR009000">
    <property type="entry name" value="Transl_B-barrel_sf"/>
</dbReference>
<dbReference type="InterPro" id="IPR004540">
    <property type="entry name" value="Transl_elong_EFG/EF2"/>
</dbReference>
<dbReference type="InterPro" id="IPR005517">
    <property type="entry name" value="Transl_elong_EFG/EF2_IV"/>
</dbReference>
<dbReference type="NCBIfam" id="TIGR00484">
    <property type="entry name" value="EF-G"/>
    <property type="match status" value="1"/>
</dbReference>
<dbReference type="NCBIfam" id="NF009379">
    <property type="entry name" value="PRK12740.1-3"/>
    <property type="match status" value="1"/>
</dbReference>
<dbReference type="NCBIfam" id="NF009381">
    <property type="entry name" value="PRK12740.1-5"/>
    <property type="match status" value="1"/>
</dbReference>
<dbReference type="NCBIfam" id="TIGR00231">
    <property type="entry name" value="small_GTP"/>
    <property type="match status" value="1"/>
</dbReference>
<dbReference type="PANTHER" id="PTHR43261:SF1">
    <property type="entry name" value="RIBOSOME-RELEASING FACTOR 2, MITOCHONDRIAL"/>
    <property type="match status" value="1"/>
</dbReference>
<dbReference type="PANTHER" id="PTHR43261">
    <property type="entry name" value="TRANSLATION ELONGATION FACTOR G-RELATED"/>
    <property type="match status" value="1"/>
</dbReference>
<dbReference type="Pfam" id="PF00679">
    <property type="entry name" value="EFG_C"/>
    <property type="match status" value="1"/>
</dbReference>
<dbReference type="Pfam" id="PF14492">
    <property type="entry name" value="EFG_III"/>
    <property type="match status" value="1"/>
</dbReference>
<dbReference type="Pfam" id="PF03764">
    <property type="entry name" value="EFG_IV"/>
    <property type="match status" value="1"/>
</dbReference>
<dbReference type="Pfam" id="PF00009">
    <property type="entry name" value="GTP_EFTU"/>
    <property type="match status" value="1"/>
</dbReference>
<dbReference type="Pfam" id="PF03144">
    <property type="entry name" value="GTP_EFTU_D2"/>
    <property type="match status" value="1"/>
</dbReference>
<dbReference type="PRINTS" id="PR00315">
    <property type="entry name" value="ELONGATNFCT"/>
</dbReference>
<dbReference type="SMART" id="SM00838">
    <property type="entry name" value="EFG_C"/>
    <property type="match status" value="1"/>
</dbReference>
<dbReference type="SMART" id="SM00889">
    <property type="entry name" value="EFG_IV"/>
    <property type="match status" value="1"/>
</dbReference>
<dbReference type="SUPFAM" id="SSF54980">
    <property type="entry name" value="EF-G C-terminal domain-like"/>
    <property type="match status" value="2"/>
</dbReference>
<dbReference type="SUPFAM" id="SSF52540">
    <property type="entry name" value="P-loop containing nucleoside triphosphate hydrolases"/>
    <property type="match status" value="1"/>
</dbReference>
<dbReference type="SUPFAM" id="SSF54211">
    <property type="entry name" value="Ribosomal protein S5 domain 2-like"/>
    <property type="match status" value="1"/>
</dbReference>
<dbReference type="SUPFAM" id="SSF50447">
    <property type="entry name" value="Translation proteins"/>
    <property type="match status" value="1"/>
</dbReference>
<dbReference type="PROSITE" id="PS00301">
    <property type="entry name" value="G_TR_1"/>
    <property type="match status" value="1"/>
</dbReference>
<dbReference type="PROSITE" id="PS51722">
    <property type="entry name" value="G_TR_2"/>
    <property type="match status" value="1"/>
</dbReference>
<keyword id="KW-0963">Cytoplasm</keyword>
<keyword id="KW-0251">Elongation factor</keyword>
<keyword id="KW-0342">GTP-binding</keyword>
<keyword id="KW-0547">Nucleotide-binding</keyword>
<keyword id="KW-0648">Protein biosynthesis</keyword>
<keyword id="KW-1185">Reference proteome</keyword>
<evidence type="ECO:0000255" key="1">
    <source>
        <dbReference type="HAMAP-Rule" id="MF_00054"/>
    </source>
</evidence>
<evidence type="ECO:0000256" key="2">
    <source>
        <dbReference type="SAM" id="MobiDB-lite"/>
    </source>
</evidence>
<sequence length="688" mass="76491">MGREYPLEKFRNIGIMAHIDAGKTTTTERILFYTGRTHKIGEVHEGQATMDWMAQEQERGITITSAATFCKWKGYAINIIDTPGHVDFTVEVERSLRVLDGAVTVLDAKSGVEPQTETVWRQADNYGVPRLVYVNKMDSTGADFYMCVNTLRDRLHCNAIPIQIPIGSESEFKGIVNLVKNEAIIYEDDLGTVMDEVEIPGDLKDEAEKYRTELIEAISELDEDIMMKYLEGEELTEEEIISAIRKGVISNKIVPVLCGSSYKNKGVQPMIDAVVDFMPSPLDIPPIKGTDPETGEETDRPADDNQPLSALAFKIATDPFVGKLAFTRIYSGIMKSGTYVYNSTKGKKERIARLVKMHSNRREEVDELRAGDLGAIVGLKDTTTGNTLCDEQNAVVLESMEFPEPVIHVAIEPKTKAGQEKMGIALSKLAEEDPTFKTHTDQETGQTIISGMGELHLEIIVDRLQREFKVECNVGKPQVAYKETIRKTVKAEGKFVRQSGGHGQYGHCWIEMSPSEEGYSFENAIVGGTIPKEYISPIDEGIKQASETGTVAGYPAINFKVKLYDGSYHDVDSSEMAFKIAASMAFKNAMSKADPVLLEPMMRVEVTVPEEYMGDVIGDINSRRGRIEGMDPRAGAQVIRSFVPLSEMFGYATVLRSRTQGRGVYSMTFDHYEEVPKSIQEKITGEKK</sequence>
<gene>
    <name evidence="1" type="primary">fusA</name>
    <name type="ordered locus">CKL_0221</name>
</gene>
<accession>A5N4P4</accession>
<organism>
    <name type="scientific">Clostridium kluyveri (strain ATCC 8527 / DSM 555 / NBRC 12016 / NCIMB 10680 / K1)</name>
    <dbReference type="NCBI Taxonomy" id="431943"/>
    <lineage>
        <taxon>Bacteria</taxon>
        <taxon>Bacillati</taxon>
        <taxon>Bacillota</taxon>
        <taxon>Clostridia</taxon>
        <taxon>Eubacteriales</taxon>
        <taxon>Clostridiaceae</taxon>
        <taxon>Clostridium</taxon>
    </lineage>
</organism>
<feature type="chain" id="PRO_1000074953" description="Elongation factor G">
    <location>
        <begin position="1"/>
        <end position="688"/>
    </location>
</feature>
<feature type="domain" description="tr-type G">
    <location>
        <begin position="8"/>
        <end position="282"/>
    </location>
</feature>
<feature type="region of interest" description="Disordered" evidence="2">
    <location>
        <begin position="282"/>
        <end position="305"/>
    </location>
</feature>
<feature type="binding site" evidence="1">
    <location>
        <begin position="17"/>
        <end position="24"/>
    </location>
    <ligand>
        <name>GTP</name>
        <dbReference type="ChEBI" id="CHEBI:37565"/>
    </ligand>
</feature>
<feature type="binding site" evidence="1">
    <location>
        <begin position="81"/>
        <end position="85"/>
    </location>
    <ligand>
        <name>GTP</name>
        <dbReference type="ChEBI" id="CHEBI:37565"/>
    </ligand>
</feature>
<feature type="binding site" evidence="1">
    <location>
        <begin position="135"/>
        <end position="138"/>
    </location>
    <ligand>
        <name>GTP</name>
        <dbReference type="ChEBI" id="CHEBI:37565"/>
    </ligand>
</feature>
<protein>
    <recommendedName>
        <fullName evidence="1">Elongation factor G</fullName>
        <shortName evidence="1">EF-G</shortName>
    </recommendedName>
</protein>
<proteinExistence type="inferred from homology"/>
<name>EFG_CLOK5</name>
<reference key="1">
    <citation type="journal article" date="2008" name="Proc. Natl. Acad. Sci. U.S.A.">
        <title>The genome of Clostridium kluyveri, a strict anaerobe with unique metabolic features.</title>
        <authorList>
            <person name="Seedorf H."/>
            <person name="Fricke W.F."/>
            <person name="Veith B."/>
            <person name="Brueggemann H."/>
            <person name="Liesegang H."/>
            <person name="Strittmatter A."/>
            <person name="Miethke M."/>
            <person name="Buckel W."/>
            <person name="Hinderberger J."/>
            <person name="Li F."/>
            <person name="Hagemeier C."/>
            <person name="Thauer R.K."/>
            <person name="Gottschalk G."/>
        </authorList>
    </citation>
    <scope>NUCLEOTIDE SEQUENCE [LARGE SCALE GENOMIC DNA]</scope>
    <source>
        <strain>ATCC 8527 / DSM 555 / NBRC 12016 / NCIMB 10680 / K1</strain>
    </source>
</reference>
<comment type="function">
    <text evidence="1">Catalyzes the GTP-dependent ribosomal translocation step during translation elongation. During this step, the ribosome changes from the pre-translocational (PRE) to the post-translocational (POST) state as the newly formed A-site-bound peptidyl-tRNA and P-site-bound deacylated tRNA move to the P and E sites, respectively. Catalyzes the coordinated movement of the two tRNA molecules, the mRNA and conformational changes in the ribosome.</text>
</comment>
<comment type="subcellular location">
    <subcellularLocation>
        <location evidence="1">Cytoplasm</location>
    </subcellularLocation>
</comment>
<comment type="similarity">
    <text evidence="1">Belongs to the TRAFAC class translation factor GTPase superfamily. Classic translation factor GTPase family. EF-G/EF-2 subfamily.</text>
</comment>